<gene>
    <name type="primary">eryCIII</name>
    <name type="ordered locus">SACE_0726</name>
</gene>
<evidence type="ECO:0000255" key="1"/>
<evidence type="ECO:0000269" key="2">
    <source>
    </source>
</evidence>
<evidence type="ECO:0000269" key="3">
    <source>
    </source>
</evidence>
<evidence type="ECO:0000269" key="4">
    <source>
    </source>
</evidence>
<evidence type="ECO:0000305" key="5"/>
<evidence type="ECO:0007829" key="6">
    <source>
        <dbReference type="PDB" id="2YJN"/>
    </source>
</evidence>
<proteinExistence type="evidence at protein level"/>
<organism>
    <name type="scientific">Saccharopolyspora erythraea (strain ATCC 11635 / DSM 40517 / JCM 4748 / NBRC 13426 / NCIMB 8594 / NRRL 2338)</name>
    <dbReference type="NCBI Taxonomy" id="405948"/>
    <lineage>
        <taxon>Bacteria</taxon>
        <taxon>Bacillati</taxon>
        <taxon>Actinomycetota</taxon>
        <taxon>Actinomycetes</taxon>
        <taxon>Pseudonocardiales</taxon>
        <taxon>Pseudonocardiaceae</taxon>
        <taxon>Saccharopolyspora</taxon>
    </lineage>
</organism>
<accession>A4F7P3</accession>
<accession>O33935</accession>
<accession>O54224</accession>
<comment type="function">
    <text evidence="2">Catalyzes the conversion of alpha-L-mycarosylerythronolide B into erythromycin D in the erythromycin biosynthesis pathway.</text>
</comment>
<comment type="catalytic activity">
    <reaction evidence="2">
        <text>3-O-alpha-L-mycarosylerythronolide B + dTDP-alpha-D-desosamine = erythromycin D + dTDP + H(+)</text>
        <dbReference type="Rhea" id="RHEA:32091"/>
        <dbReference type="ChEBI" id="CHEBI:15378"/>
        <dbReference type="ChEBI" id="CHEBI:28343"/>
        <dbReference type="ChEBI" id="CHEBI:58369"/>
        <dbReference type="ChEBI" id="CHEBI:63260"/>
        <dbReference type="ChEBI" id="CHEBI:63677"/>
        <dbReference type="EC" id="2.4.1.278"/>
    </reaction>
</comment>
<comment type="biophysicochemical properties">
    <kinetics>
        <KM evidence="3">50 uM for 3-alpha-mycarosylerythronolide B</KM>
        <text>kcat is 1 min(-1).</text>
    </kinetics>
</comment>
<comment type="pathway">
    <text evidence="2">Antibiotic biosynthesis; erythromycin biosynthesis.</text>
</comment>
<comment type="subunit">
    <text evidence="4">Heterotetramer composed of EryCII and EryCIII.</text>
</comment>
<comment type="similarity">
    <text evidence="5">Belongs to the glycosyltransferase 28 family.</text>
</comment>
<dbReference type="EC" id="2.4.1.278"/>
<dbReference type="EMBL" id="U77454">
    <property type="protein sequence ID" value="AAB84067.1"/>
    <property type="molecule type" value="Genomic_DNA"/>
</dbReference>
<dbReference type="EMBL" id="Y14332">
    <property type="protein sequence ID" value="CAA74710.1"/>
    <property type="molecule type" value="Genomic_DNA"/>
</dbReference>
<dbReference type="EMBL" id="AM420293">
    <property type="protein sequence ID" value="CAM00067.1"/>
    <property type="molecule type" value="Genomic_DNA"/>
</dbReference>
<dbReference type="RefSeq" id="WP_009950402.1">
    <property type="nucleotide sequence ID" value="NC_009142.1"/>
</dbReference>
<dbReference type="PDB" id="2YJN">
    <property type="method" value="X-ray"/>
    <property type="resolution" value="3.09 A"/>
    <property type="chains" value="A=1-421"/>
</dbReference>
<dbReference type="PDBsum" id="2YJN"/>
<dbReference type="SMR" id="A4F7P3"/>
<dbReference type="STRING" id="405948.SACE_0726"/>
<dbReference type="CAZy" id="GT1">
    <property type="family name" value="Glycosyltransferase Family 1"/>
</dbReference>
<dbReference type="KEGG" id="sen:SACE_0726"/>
<dbReference type="eggNOG" id="COG1819">
    <property type="taxonomic scope" value="Bacteria"/>
</dbReference>
<dbReference type="HOGENOM" id="CLU_000537_7_4_11"/>
<dbReference type="OrthoDB" id="5488434at2"/>
<dbReference type="BioCyc" id="MetaCyc:MONOMER-17080"/>
<dbReference type="UniPathway" id="UPA00240"/>
<dbReference type="EvolutionaryTrace" id="A4F7P3"/>
<dbReference type="Proteomes" id="UP000006728">
    <property type="component" value="Chromosome"/>
</dbReference>
<dbReference type="GO" id="GO:0016758">
    <property type="term" value="F:hexosyltransferase activity"/>
    <property type="evidence" value="ECO:0000314"/>
    <property type="project" value="UniProtKB"/>
</dbReference>
<dbReference type="GO" id="GO:0008194">
    <property type="term" value="F:UDP-glycosyltransferase activity"/>
    <property type="evidence" value="ECO:0007669"/>
    <property type="project" value="InterPro"/>
</dbReference>
<dbReference type="GO" id="GO:0017000">
    <property type="term" value="P:antibiotic biosynthetic process"/>
    <property type="evidence" value="ECO:0000314"/>
    <property type="project" value="UniProtKB"/>
</dbReference>
<dbReference type="CDD" id="cd03784">
    <property type="entry name" value="GT1_Gtf-like"/>
    <property type="match status" value="1"/>
</dbReference>
<dbReference type="FunFam" id="3.40.50.2000:FF:000072">
    <property type="entry name" value="Glycosyl transferase"/>
    <property type="match status" value="1"/>
</dbReference>
<dbReference type="FunFam" id="3.40.50.2000:FF:000261">
    <property type="entry name" value="Putative glycosyl transferase"/>
    <property type="match status" value="1"/>
</dbReference>
<dbReference type="Gene3D" id="3.40.50.2000">
    <property type="entry name" value="Glycogen Phosphorylase B"/>
    <property type="match status" value="2"/>
</dbReference>
<dbReference type="InterPro" id="IPR010610">
    <property type="entry name" value="EryCIII-like_C"/>
</dbReference>
<dbReference type="InterPro" id="IPR048284">
    <property type="entry name" value="EryCIII-like_N"/>
</dbReference>
<dbReference type="InterPro" id="IPR030953">
    <property type="entry name" value="Glycosyl_450act"/>
</dbReference>
<dbReference type="InterPro" id="IPR050426">
    <property type="entry name" value="Glycosyltransferase_28"/>
</dbReference>
<dbReference type="InterPro" id="IPR002213">
    <property type="entry name" value="UDP_glucos_trans"/>
</dbReference>
<dbReference type="NCBIfam" id="TIGR04516">
    <property type="entry name" value="glycosyl_450act"/>
    <property type="match status" value="1"/>
</dbReference>
<dbReference type="PANTHER" id="PTHR48050">
    <property type="entry name" value="STEROL 3-BETA-GLUCOSYLTRANSFERASE"/>
    <property type="match status" value="1"/>
</dbReference>
<dbReference type="PANTHER" id="PTHR48050:SF13">
    <property type="entry name" value="STEROL 3-BETA-GLUCOSYLTRANSFERASE UGT80A2"/>
    <property type="match status" value="1"/>
</dbReference>
<dbReference type="Pfam" id="PF06722">
    <property type="entry name" value="EryCIII-like_C"/>
    <property type="match status" value="1"/>
</dbReference>
<dbReference type="Pfam" id="PF21036">
    <property type="entry name" value="EryCIII-like_N"/>
    <property type="match status" value="1"/>
</dbReference>
<dbReference type="SUPFAM" id="SSF53756">
    <property type="entry name" value="UDP-Glycosyltransferase/glycogen phosphorylase"/>
    <property type="match status" value="1"/>
</dbReference>
<reference key="1">
    <citation type="journal article" date="1997" name="Microbiology">
        <title>Sequencing and mutagenesis of genes from the erythromycin biosynthetic gene cluster of Saccharopolyspora erythraea that are involved in L-mycarose and D-desosamine production.</title>
        <authorList>
            <person name="Summers R.G."/>
            <person name="Donadio S."/>
            <person name="Staver M.J."/>
            <person name="Wendt-Pienkowski E."/>
            <person name="Hutchinson C.R."/>
            <person name="Katz L."/>
        </authorList>
    </citation>
    <scope>NUCLEOTIDE SEQUENCE [GENOMIC DNA]</scope>
    <source>
        <strain>ATCC 11635 / DSM 40517 / JCM 4748 / NBRC 13426 / NCIMB 8594 / NRRL 2338</strain>
    </source>
</reference>
<reference key="2">
    <citation type="journal article" date="1998" name="Mol. Gen. Genet.">
        <title>Targeted gene inactivation for the elucidation of deoxysugar biosynthesis in the erythromycin producer Saccharopolyspora erythraea.</title>
        <authorList>
            <person name="Salah-Bey K."/>
            <person name="Doumith M."/>
            <person name="Michel J.M."/>
            <person name="Haydock S."/>
            <person name="Cortes J."/>
            <person name="Leadlay P.F."/>
            <person name="Raynal M.C."/>
        </authorList>
    </citation>
    <scope>NUCLEOTIDE SEQUENCE [GENOMIC DNA]</scope>
    <source>
        <strain>ATCC 11635 / DSM 40517 / JCM 4748 / NBRC 13426 / NCIMB 8594 / NRRL 2338</strain>
    </source>
</reference>
<reference key="3">
    <citation type="journal article" date="2007" name="Nat. Biotechnol.">
        <title>Complete genome sequence of the erythromycin-producing bacterium Saccharopolyspora erythraea NRRL23338.</title>
        <authorList>
            <person name="Oliynyk M."/>
            <person name="Samborskyy M."/>
            <person name="Lester J.B."/>
            <person name="Mironenko T."/>
            <person name="Scott N."/>
            <person name="Dickens S."/>
            <person name="Haydock S.F."/>
            <person name="Leadlay P.F."/>
        </authorList>
    </citation>
    <scope>NUCLEOTIDE SEQUENCE [LARGE SCALE GENOMIC DNA]</scope>
    <source>
        <strain>ATCC 11635 / DSM 40517 / JCM 4748 / NBRC 13426 / NCIMB 8594 / NRRL 2338</strain>
    </source>
</reference>
<reference key="4">
    <citation type="journal article" date="2004" name="J. Am. Chem. Soc.">
        <title>Reconstitution and characterization of a new desosaminyl transferase, EryCIII, from the erythromycin biosynthetic pathway.</title>
        <authorList>
            <person name="Lee H.Y."/>
            <person name="Chung H.S."/>
            <person name="Hang C."/>
            <person name="Khosla C."/>
            <person name="Walsh C.T."/>
            <person name="Kahne D."/>
            <person name="Walker S."/>
        </authorList>
    </citation>
    <scope>FUNCTION</scope>
    <scope>CATALYTIC ACTIVITY</scope>
    <scope>PATHWAY</scope>
    <source>
        <strain>ATCC 11635 / DSM 40517 / JCM 4748 / NBRC 13426 / NCIMB 8594 / NRRL 2338</strain>
    </source>
</reference>
<reference key="5">
    <citation type="journal article" date="2005" name="J. Am. Chem. Soc.">
        <title>In vitro reconstitution of EryCIII activity for the preparation of unnatural macrolides.</title>
        <authorList>
            <person name="Yuan Y."/>
            <person name="Chung H.S."/>
            <person name="Leimkuhler C."/>
            <person name="Walsh C.T."/>
            <person name="Kahne D."/>
            <person name="Walker S."/>
        </authorList>
    </citation>
    <scope>BIOPHYSICOCHEMICAL PROPERTIES</scope>
    <source>
        <strain>ATCC 11635 / DSM 40517 / JCM 4748 / NBRC 13426 / NCIMB 8594 / NRRL 2338</strain>
    </source>
</reference>
<reference key="6">
    <citation type="journal article" date="2012" name="J. Mol. Biol.">
        <title>Structure of the glycosyltransferase EryCIII in complex with its activating P450 homologue EryCII.</title>
        <authorList>
            <person name="Moncrieffe M.C."/>
            <person name="Fernandez M.J."/>
            <person name="Spiteller D."/>
            <person name="Matsumura H."/>
            <person name="Gay N.J."/>
            <person name="Luisi B.F."/>
            <person name="Leadlay P.F."/>
        </authorList>
    </citation>
    <scope>X-RAY CRYSTALLOGRAPHY (3.09 ANGSTROMS) IN COMPLEX WITH ERYCII</scope>
    <scope>SUBUNIT</scope>
    <source>
        <strain>ATCC 11635 / DSM 40517 / JCM 4748 / NBRC 13426 / NCIMB 8594 / NRRL 2338</strain>
    </source>
</reference>
<name>ERYC3_SACEN</name>
<sequence>MRVVFSSMASKSHLFGLVPLAWAFRAAGHEVRVVASPALTEDITAAGLTAVPVGTDVDLVDFMTHAGHDIIDYVRSLDFSERDPATLTWEHLLGMQTVLTPTFYALMSPDTLIEGMVSFCRKWRPDLVIWEPLTFAAPIAAAVTGTPHARLLWGPDITTRARQNFLGLLPDQPEEHREDPLAEWLTWTLEKYGGPAFDEEVVVGQWTIDPAPAAIRLDTGLKTVGMRYVDYNGPSVVPEWLHDEPERRRVCLTLGISSRENSIGQVSIEELLGAVGDVDAEIIATFDAQQLEGVANIPDNVRTVGFVPMHALLPTCAATVHHGGPGSWHTAAIHGVPQVILPDGWDTGVRAQRTQEFGAGIALPVPELTPDQLRESVKRVLDDPAHRAGAARMRDDMLAEPSPAEVVGICEELAAGRREPR</sequence>
<keyword id="KW-0002">3D-structure</keyword>
<keyword id="KW-0045">Antibiotic biosynthesis</keyword>
<keyword id="KW-0328">Glycosyltransferase</keyword>
<keyword id="KW-1185">Reference proteome</keyword>
<keyword id="KW-0732">Signal</keyword>
<keyword id="KW-0808">Transferase</keyword>
<protein>
    <recommendedName>
        <fullName>3-alpha-mycarosylerythronolide B desosaminyl transferase</fullName>
        <ecNumber>2.4.1.278</ecNumber>
    </recommendedName>
    <alternativeName>
        <fullName>Desosaminyl transferase EryCIII</fullName>
    </alternativeName>
    <alternativeName>
        <fullName>Erythromycin biosynthesis protein CIII</fullName>
    </alternativeName>
</protein>
<feature type="signal peptide" evidence="1">
    <location>
        <begin position="1"/>
        <end position="23"/>
    </location>
</feature>
<feature type="chain" id="PRO_0000418493" description="3-alpha-mycarosylerythronolide B desosaminyl transferase">
    <location>
        <begin position="24"/>
        <end position="421"/>
    </location>
</feature>
<feature type="sequence conflict" description="In Ref. 1; AAB84067." evidence="5" ref="1">
    <original>D</original>
    <variation>G</variation>
    <location>
        <position position="179"/>
    </location>
</feature>
<feature type="sequence conflict" description="In Ref. 1; AAB84067." evidence="5" ref="1">
    <original>D</original>
    <variation>H</variation>
    <location>
        <position position="299"/>
    </location>
</feature>
<feature type="strand" evidence="6">
    <location>
        <begin position="2"/>
        <end position="6"/>
    </location>
</feature>
<feature type="helix" evidence="6">
    <location>
        <begin position="11"/>
        <end position="14"/>
    </location>
</feature>
<feature type="turn" evidence="6">
    <location>
        <begin position="15"/>
        <end position="17"/>
    </location>
</feature>
<feature type="helix" evidence="6">
    <location>
        <begin position="18"/>
        <end position="26"/>
    </location>
</feature>
<feature type="strand" evidence="6">
    <location>
        <begin position="30"/>
        <end position="35"/>
    </location>
</feature>
<feature type="helix" evidence="6">
    <location>
        <begin position="37"/>
        <end position="39"/>
    </location>
</feature>
<feature type="helix" evidence="6">
    <location>
        <begin position="40"/>
        <end position="44"/>
    </location>
</feature>
<feature type="turn" evidence="6">
    <location>
        <begin position="45"/>
        <end position="47"/>
    </location>
</feature>
<feature type="strand" evidence="6">
    <location>
        <begin position="50"/>
        <end position="52"/>
    </location>
</feature>
<feature type="helix" evidence="6">
    <location>
        <begin position="59"/>
        <end position="65"/>
    </location>
</feature>
<feature type="helix" evidence="6">
    <location>
        <begin position="68"/>
        <end position="74"/>
    </location>
</feature>
<feature type="helix" evidence="6">
    <location>
        <begin position="84"/>
        <end position="87"/>
    </location>
</feature>
<feature type="helix" evidence="6">
    <location>
        <begin position="89"/>
        <end position="102"/>
    </location>
</feature>
<feature type="turn" evidence="6">
    <location>
        <begin position="103"/>
        <end position="106"/>
    </location>
</feature>
<feature type="helix" evidence="6">
    <location>
        <begin position="110"/>
        <end position="123"/>
    </location>
</feature>
<feature type="strand" evidence="6">
    <location>
        <begin position="126"/>
        <end position="130"/>
    </location>
</feature>
<feature type="helix" evidence="6">
    <location>
        <begin position="136"/>
        <end position="144"/>
    </location>
</feature>
<feature type="strand" evidence="6">
    <location>
        <begin position="148"/>
        <end position="151"/>
    </location>
</feature>
<feature type="helix" evidence="6">
    <location>
        <begin position="157"/>
        <end position="168"/>
    </location>
</feature>
<feature type="helix" evidence="6">
    <location>
        <begin position="169"/>
        <end position="171"/>
    </location>
</feature>
<feature type="turn" evidence="6">
    <location>
        <begin position="174"/>
        <end position="176"/>
    </location>
</feature>
<feature type="helix" evidence="6">
    <location>
        <begin position="180"/>
        <end position="191"/>
    </location>
</feature>
<feature type="helix" evidence="6">
    <location>
        <begin position="199"/>
        <end position="201"/>
    </location>
</feature>
<feature type="strand" evidence="6">
    <location>
        <begin position="205"/>
        <end position="209"/>
    </location>
</feature>
<feature type="helix" evidence="6">
    <location>
        <begin position="213"/>
        <end position="215"/>
    </location>
</feature>
<feature type="strand" evidence="6">
    <location>
        <begin position="223"/>
        <end position="225"/>
    </location>
</feature>
<feature type="helix" evidence="6">
    <location>
        <begin position="239"/>
        <end position="241"/>
    </location>
</feature>
<feature type="strand" evidence="6">
    <location>
        <begin position="249"/>
        <end position="253"/>
    </location>
</feature>
<feature type="turn" evidence="6">
    <location>
        <begin position="268"/>
        <end position="271"/>
    </location>
</feature>
<feature type="helix" evidence="6">
    <location>
        <begin position="272"/>
        <end position="276"/>
    </location>
</feature>
<feature type="strand" evidence="6">
    <location>
        <begin position="278"/>
        <end position="284"/>
    </location>
</feature>
<feature type="turn" evidence="6">
    <location>
        <begin position="288"/>
        <end position="291"/>
    </location>
</feature>
<feature type="strand" evidence="6">
    <location>
        <begin position="299"/>
        <end position="303"/>
    </location>
</feature>
<feature type="helix" evidence="6">
    <location>
        <begin position="309"/>
        <end position="312"/>
    </location>
</feature>
<feature type="helix" evidence="6">
    <location>
        <begin position="313"/>
        <end position="315"/>
    </location>
</feature>
<feature type="strand" evidence="6">
    <location>
        <begin position="317"/>
        <end position="321"/>
    </location>
</feature>
<feature type="helix" evidence="6">
    <location>
        <begin position="325"/>
        <end position="333"/>
    </location>
</feature>
<feature type="strand" evidence="6">
    <location>
        <begin position="338"/>
        <end position="340"/>
    </location>
</feature>
<feature type="helix" evidence="6">
    <location>
        <begin position="345"/>
        <end position="357"/>
    </location>
</feature>
<feature type="strand" evidence="6">
    <location>
        <begin position="359"/>
        <end position="362"/>
    </location>
</feature>
<feature type="turn" evidence="6">
    <location>
        <begin position="365"/>
        <end position="367"/>
    </location>
</feature>
<feature type="helix" evidence="6">
    <location>
        <begin position="370"/>
        <end position="382"/>
    </location>
</feature>
<feature type="helix" evidence="6">
    <location>
        <begin position="384"/>
        <end position="398"/>
    </location>
</feature>
<feature type="helix" evidence="6">
    <location>
        <begin position="403"/>
        <end position="415"/>
    </location>
</feature>